<dbReference type="EMBL" id="AE014075">
    <property type="protein sequence ID" value="AAN83710.1"/>
    <property type="molecule type" value="Genomic_DNA"/>
</dbReference>
<dbReference type="RefSeq" id="WP_000492914.1">
    <property type="nucleotide sequence ID" value="NZ_CP051263.1"/>
</dbReference>
<dbReference type="SMR" id="P0AF87"/>
<dbReference type="STRING" id="199310.c5289"/>
<dbReference type="GeneID" id="93777624"/>
<dbReference type="KEGG" id="ecc:c5289"/>
<dbReference type="eggNOG" id="ENOG5032SRX">
    <property type="taxonomic scope" value="Bacteria"/>
</dbReference>
<dbReference type="HOGENOM" id="CLU_158602_0_0_6"/>
<dbReference type="BioCyc" id="ECOL199310:C5289-MONOMER"/>
<dbReference type="Proteomes" id="UP000001410">
    <property type="component" value="Chromosome"/>
</dbReference>
<dbReference type="GO" id="GO:0042597">
    <property type="term" value="C:periplasmic space"/>
    <property type="evidence" value="ECO:0007669"/>
    <property type="project" value="UniProtKB-SubCell"/>
</dbReference>
<dbReference type="Gene3D" id="3.30.1660.10">
    <property type="entry name" value="Flavin-binding protein dodecin"/>
    <property type="match status" value="1"/>
</dbReference>
<dbReference type="InterPro" id="IPR051096">
    <property type="entry name" value="BhsA/McbA_stress_biofilm_assoc"/>
</dbReference>
<dbReference type="InterPro" id="IPR025543">
    <property type="entry name" value="Dodecin-like"/>
</dbReference>
<dbReference type="InterPro" id="IPR036275">
    <property type="entry name" value="YdgH-like_sf"/>
</dbReference>
<dbReference type="InterPro" id="IPR010854">
    <property type="entry name" value="YdgH/BhsA/McbA-like_dom"/>
</dbReference>
<dbReference type="PANTHER" id="PTHR34156:SF6">
    <property type="entry name" value="OUTER MEMBRANE PROTEIN"/>
    <property type="match status" value="1"/>
</dbReference>
<dbReference type="PANTHER" id="PTHR34156">
    <property type="entry name" value="OUTER MEMBRANE PROTEIN-RELATED-RELATED"/>
    <property type="match status" value="1"/>
</dbReference>
<dbReference type="Pfam" id="PF07338">
    <property type="entry name" value="YdgH_BhsA-like"/>
    <property type="match status" value="1"/>
</dbReference>
<dbReference type="SUPFAM" id="SSF159871">
    <property type="entry name" value="YdgH-like"/>
    <property type="match status" value="1"/>
</dbReference>
<sequence length="91" mass="10149">MFSRVLALLAVLLLSANTWAAIEINNHQARNMDDVQSLGVIYINHNFATESEARQALNEETDAQGATYYHVILMREPGSNGNMHASADIYR</sequence>
<keyword id="KW-0574">Periplasm</keyword>
<keyword id="KW-1185">Reference proteome</keyword>
<keyword id="KW-0732">Signal</keyword>
<gene>
    <name type="primary">yjfY</name>
    <name type="ordered locus">c5289</name>
</gene>
<proteinExistence type="inferred from homology"/>
<accession>P0AF87</accession>
<accession>P39307</accession>
<protein>
    <recommendedName>
        <fullName>Uncharacterized protein YjfY</fullName>
    </recommendedName>
</protein>
<reference key="1">
    <citation type="journal article" date="2002" name="Proc. Natl. Acad. Sci. U.S.A.">
        <title>Extensive mosaic structure revealed by the complete genome sequence of uropathogenic Escherichia coli.</title>
        <authorList>
            <person name="Welch R.A."/>
            <person name="Burland V."/>
            <person name="Plunkett G. III"/>
            <person name="Redford P."/>
            <person name="Roesch P."/>
            <person name="Rasko D."/>
            <person name="Buckles E.L."/>
            <person name="Liou S.-R."/>
            <person name="Boutin A."/>
            <person name="Hackett J."/>
            <person name="Stroud D."/>
            <person name="Mayhew G.F."/>
            <person name="Rose D.J."/>
            <person name="Zhou S."/>
            <person name="Schwartz D.C."/>
            <person name="Perna N.T."/>
            <person name="Mobley H.L.T."/>
            <person name="Donnenberg M.S."/>
            <person name="Blattner F.R."/>
        </authorList>
    </citation>
    <scope>NUCLEOTIDE SEQUENCE [LARGE SCALE GENOMIC DNA]</scope>
    <source>
        <strain>CFT073 / ATCC 700928 / UPEC</strain>
    </source>
</reference>
<organism>
    <name type="scientific">Escherichia coli O6:H1 (strain CFT073 / ATCC 700928 / UPEC)</name>
    <dbReference type="NCBI Taxonomy" id="199310"/>
    <lineage>
        <taxon>Bacteria</taxon>
        <taxon>Pseudomonadati</taxon>
        <taxon>Pseudomonadota</taxon>
        <taxon>Gammaproteobacteria</taxon>
        <taxon>Enterobacterales</taxon>
        <taxon>Enterobacteriaceae</taxon>
        <taxon>Escherichia</taxon>
    </lineage>
</organism>
<comment type="subcellular location">
    <subcellularLocation>
        <location evidence="2">Periplasm</location>
    </subcellularLocation>
</comment>
<comment type="similarity">
    <text evidence="2">Belongs to the BhsA/McbA family.</text>
</comment>
<feature type="signal peptide" evidence="1">
    <location>
        <begin position="1"/>
        <end position="20"/>
    </location>
</feature>
<feature type="chain" id="PRO_0000044598" description="Uncharacterized protein YjfY">
    <location>
        <begin position="21"/>
        <end position="91"/>
    </location>
</feature>
<evidence type="ECO:0000255" key="1"/>
<evidence type="ECO:0000305" key="2"/>
<name>YJFY_ECOL6</name>